<keyword id="KW-0496">Mitochondrion</keyword>
<keyword id="KW-1185">Reference proteome</keyword>
<sequence length="669" mass="76848">MVQKFQSPVRVYKYPFELVMKAYERRFPKCPQMPIVLDCDVIKIESLENGAKTNTTRRCKLAVDAPYIFKKLIGVDFVYFLQHNYLDMSNRTLSIEAVNESFSSRIEIFERCRYYAHPDNAEWTCFDQTATLDIKNFFGFEHSMEKMGMKQYTQTTLKGKEIIEYFINQLEQEGVTHVDRWVPPLDAAKSPTPEQKQHHDILLDGDFIARNLGQLSPMQESKLLELRKMLDGVDDLERVPSYQTILRFLSARDWHVSQAFAMLCDSLQWRKEHRMDSLLEEYTEPAVVVEHFPGGWHHHDKDGRPIYILRLGHMDVKGLLKSLGMEGLLRLALHICEEGIQKINESAERLDKPVLNWSLLVDLEGLSMRHLWRPGIKALLYIIETVERNYPETMGRVLVVRAPRVFPIAWTIVSAFIDEHTRSKFLFYGPDCEHMKDGLAQYIDEEIVPDFLGGPCKTMIHEGGLVPKTLYKANSLEDHDDDVTIVSPGAGAATATASAEASLAPVALAPMKRLSANHQHDHQNLYKSVDLKPGFSHELLIRNEDPKSVLTWDFDVMRNDLHFTLYRVTQELPEKNDDAVSYFDLQDFVEGTNYFREEPTLICRHKESVQGSHVMHHNDSYLMHWFSPSGAQLNLFYEVLSSVNYKGSMTSLQSAFSSNSSAASSVQSR</sequence>
<proteinExistence type="inferred from homology"/>
<dbReference type="EMBL" id="CH379062">
    <property type="protein sequence ID" value="EAL32911.1"/>
    <property type="status" value="ALT_SEQ"/>
    <property type="molecule type" value="Genomic_DNA"/>
</dbReference>
<dbReference type="SMR" id="Q29JQ0"/>
<dbReference type="FunCoup" id="Q29JQ0">
    <property type="interactions" value="1389"/>
</dbReference>
<dbReference type="STRING" id="46245.Q29JQ0"/>
<dbReference type="eggNOG" id="KOG1471">
    <property type="taxonomic scope" value="Eukaryota"/>
</dbReference>
<dbReference type="HOGENOM" id="CLU_023840_0_0_1"/>
<dbReference type="InParanoid" id="Q29JQ0"/>
<dbReference type="OMA" id="AEWTCFD"/>
<dbReference type="PhylomeDB" id="Q29JQ0"/>
<dbReference type="Proteomes" id="UP000001819">
    <property type="component" value="Unplaced"/>
</dbReference>
<dbReference type="GO" id="GO:0005739">
    <property type="term" value="C:mitochondrion"/>
    <property type="evidence" value="ECO:0000250"/>
    <property type="project" value="UniProtKB"/>
</dbReference>
<dbReference type="CDD" id="cd00170">
    <property type="entry name" value="SEC14"/>
    <property type="match status" value="1"/>
</dbReference>
<dbReference type="FunFam" id="2.60.120.680:FF:000009">
    <property type="entry name" value="Blast:Protein real-time"/>
    <property type="match status" value="1"/>
</dbReference>
<dbReference type="FunFam" id="3.40.525.10:FF:000006">
    <property type="entry name" value="SEC14-like lipid binding 1"/>
    <property type="match status" value="1"/>
</dbReference>
<dbReference type="Gene3D" id="3.40.525.10">
    <property type="entry name" value="CRAL-TRIO lipid binding domain"/>
    <property type="match status" value="1"/>
</dbReference>
<dbReference type="Gene3D" id="2.60.120.680">
    <property type="entry name" value="GOLD domain"/>
    <property type="match status" value="1"/>
</dbReference>
<dbReference type="InterPro" id="IPR001251">
    <property type="entry name" value="CRAL-TRIO_dom"/>
</dbReference>
<dbReference type="InterPro" id="IPR036865">
    <property type="entry name" value="CRAL-TRIO_dom_sf"/>
</dbReference>
<dbReference type="InterPro" id="IPR011074">
    <property type="entry name" value="CRAL/TRIO_N_dom"/>
</dbReference>
<dbReference type="InterPro" id="IPR036273">
    <property type="entry name" value="CRAL/TRIO_N_dom_sf"/>
</dbReference>
<dbReference type="InterPro" id="IPR036598">
    <property type="entry name" value="GOLD_dom_sf"/>
</dbReference>
<dbReference type="InterPro" id="IPR006797">
    <property type="entry name" value="PRELI/MSF1_dom"/>
</dbReference>
<dbReference type="InterPro" id="IPR051064">
    <property type="entry name" value="SEC14/CRAL-TRIO_domain"/>
</dbReference>
<dbReference type="PANTHER" id="PTHR23324:SF66">
    <property type="entry name" value="PROTEIN REAL-TIME"/>
    <property type="match status" value="1"/>
</dbReference>
<dbReference type="PANTHER" id="PTHR23324">
    <property type="entry name" value="SEC14 RELATED PROTEIN"/>
    <property type="match status" value="1"/>
</dbReference>
<dbReference type="Pfam" id="PF00650">
    <property type="entry name" value="CRAL_TRIO"/>
    <property type="match status" value="1"/>
</dbReference>
<dbReference type="Pfam" id="PF03765">
    <property type="entry name" value="CRAL_TRIO_N"/>
    <property type="match status" value="1"/>
</dbReference>
<dbReference type="Pfam" id="PF04707">
    <property type="entry name" value="PRELI"/>
    <property type="match status" value="1"/>
</dbReference>
<dbReference type="SMART" id="SM01100">
    <property type="entry name" value="CRAL_TRIO_N"/>
    <property type="match status" value="1"/>
</dbReference>
<dbReference type="SMART" id="SM00516">
    <property type="entry name" value="SEC14"/>
    <property type="match status" value="1"/>
</dbReference>
<dbReference type="SUPFAM" id="SSF52087">
    <property type="entry name" value="CRAL/TRIO domain"/>
    <property type="match status" value="1"/>
</dbReference>
<dbReference type="SUPFAM" id="SSF46938">
    <property type="entry name" value="CRAL/TRIO N-terminal domain"/>
    <property type="match status" value="1"/>
</dbReference>
<dbReference type="SUPFAM" id="SSF101576">
    <property type="entry name" value="Supernatant protein factor (SPF), C-terminal domain"/>
    <property type="match status" value="1"/>
</dbReference>
<dbReference type="PROSITE" id="PS50191">
    <property type="entry name" value="CRAL_TRIO"/>
    <property type="match status" value="1"/>
</dbReference>
<dbReference type="PROSITE" id="PS50904">
    <property type="entry name" value="PRELI_MSF1"/>
    <property type="match status" value="1"/>
</dbReference>
<accession>Q29JQ0</accession>
<evidence type="ECO:0000250" key="1">
    <source>
        <dbReference type="UniProtKB" id="Q9VMD6"/>
    </source>
</evidence>
<evidence type="ECO:0000255" key="2"/>
<evidence type="ECO:0000255" key="3">
    <source>
        <dbReference type="PROSITE-ProRule" id="PRU00056"/>
    </source>
</evidence>
<evidence type="ECO:0000255" key="4">
    <source>
        <dbReference type="PROSITE-ProRule" id="PRU00158"/>
    </source>
</evidence>
<evidence type="ECO:0000305" key="5"/>
<evidence type="ECO:0000312" key="6">
    <source>
        <dbReference type="EMBL" id="EAL32911.1"/>
    </source>
</evidence>
<comment type="subcellular location">
    <subcellularLocation>
        <location evidence="1">Mitochondrion</location>
    </subcellularLocation>
</comment>
<comment type="sequence caution" evidence="5">
    <conflict type="erroneous gene model prediction">
        <sequence resource="EMBL-CDS" id="EAL32911"/>
    </conflict>
</comment>
<protein>
    <recommendedName>
        <fullName>Protein real-time</fullName>
    </recommendedName>
</protein>
<gene>
    <name evidence="1" type="primary">retm</name>
    <name type="ORF">GA21858</name>
</gene>
<reference evidence="6" key="1">
    <citation type="journal article" date="2005" name="Genome Res.">
        <title>Comparative genome sequencing of Drosophila pseudoobscura: chromosomal, gene, and cis-element evolution.</title>
        <authorList>
            <person name="Richards S."/>
            <person name="Liu Y."/>
            <person name="Bettencourt B.R."/>
            <person name="Hradecky P."/>
            <person name="Letovsky S."/>
            <person name="Nielsen R."/>
            <person name="Thornton K."/>
            <person name="Hubisz M.J."/>
            <person name="Chen R."/>
            <person name="Meisel R.P."/>
            <person name="Couronne O."/>
            <person name="Hua S."/>
            <person name="Smith M.A."/>
            <person name="Zhang P."/>
            <person name="Liu J."/>
            <person name="Bussemaker H.J."/>
            <person name="van Batenburg M.F."/>
            <person name="Howells S.L."/>
            <person name="Scherer S.E."/>
            <person name="Sodergren E."/>
            <person name="Matthews B.B."/>
            <person name="Crosby M.A."/>
            <person name="Schroeder A.J."/>
            <person name="Ortiz-Barrientos D."/>
            <person name="Rives C.M."/>
            <person name="Metzker M.L."/>
            <person name="Muzny D.M."/>
            <person name="Scott G."/>
            <person name="Steffen D."/>
            <person name="Wheeler D.A."/>
            <person name="Worley K.C."/>
            <person name="Havlak P."/>
            <person name="Durbin K.J."/>
            <person name="Egan A."/>
            <person name="Gill R."/>
            <person name="Hume J."/>
            <person name="Morgan M.B."/>
            <person name="Miner G."/>
            <person name="Hamilton C."/>
            <person name="Huang Y."/>
            <person name="Waldron L."/>
            <person name="Verduzco D."/>
            <person name="Clerc-Blankenburg K.P."/>
            <person name="Dubchak I."/>
            <person name="Noor M.A.F."/>
            <person name="Anderson W."/>
            <person name="White K.P."/>
            <person name="Clark A.G."/>
            <person name="Schaeffer S.W."/>
            <person name="Gelbart W.M."/>
            <person name="Weinstock G.M."/>
            <person name="Gibbs R.A."/>
        </authorList>
    </citation>
    <scope>NUCLEOTIDE SEQUENCE [LARGE SCALE GENOMIC DNA]</scope>
    <source>
        <strain>MV2-25 / Tucson 14011-0121.94</strain>
    </source>
</reference>
<organism>
    <name type="scientific">Drosophila pseudoobscura pseudoobscura</name>
    <name type="common">Fruit fly</name>
    <dbReference type="NCBI Taxonomy" id="46245"/>
    <lineage>
        <taxon>Eukaryota</taxon>
        <taxon>Metazoa</taxon>
        <taxon>Ecdysozoa</taxon>
        <taxon>Arthropoda</taxon>
        <taxon>Hexapoda</taxon>
        <taxon>Insecta</taxon>
        <taxon>Pterygota</taxon>
        <taxon>Neoptera</taxon>
        <taxon>Endopterygota</taxon>
        <taxon>Diptera</taxon>
        <taxon>Brachycera</taxon>
        <taxon>Muscomorpha</taxon>
        <taxon>Ephydroidea</taxon>
        <taxon>Drosophilidae</taxon>
        <taxon>Drosophila</taxon>
        <taxon>Sophophora</taxon>
    </lineage>
</organism>
<name>RETM_DROPS</name>
<feature type="chain" id="PRO_0000312684" description="Protein real-time">
    <location>
        <begin position="1"/>
        <end position="669"/>
    </location>
</feature>
<feature type="domain" description="PRELI/MSF1" evidence="4">
    <location>
        <begin position="3"/>
        <end position="175"/>
    </location>
</feature>
<feature type="domain" description="CRAL-TRIO" evidence="3">
    <location>
        <begin position="284"/>
        <end position="460"/>
    </location>
</feature>
<feature type="domain" description="GOLD" evidence="2">
    <location>
        <begin position="522"/>
        <end position="641"/>
    </location>
</feature>